<accession>P0AEB7</accession>
<accession>P76258</accession>
<gene>
    <name type="primary">yoaB</name>
    <name type="ordered locus">b1809</name>
    <name type="ordered locus">JW5295</name>
</gene>
<protein>
    <recommendedName>
        <fullName>RutC family protein YoaB</fullName>
    </recommendedName>
</protein>
<evidence type="ECO:0000305" key="1"/>
<comment type="similarity">
    <text evidence="1">Belongs to the RutC family.</text>
</comment>
<proteinExistence type="inferred from homology"/>
<dbReference type="EMBL" id="U00096">
    <property type="protein sequence ID" value="AAC74879.2"/>
    <property type="molecule type" value="Genomic_DNA"/>
</dbReference>
<dbReference type="EMBL" id="AP009048">
    <property type="protein sequence ID" value="BAA15618.2"/>
    <property type="molecule type" value="Genomic_DNA"/>
</dbReference>
<dbReference type="PIR" id="A64942">
    <property type="entry name" value="A64942"/>
</dbReference>
<dbReference type="RefSeq" id="NP_416323.4">
    <property type="nucleotide sequence ID" value="NC_000913.3"/>
</dbReference>
<dbReference type="RefSeq" id="WP_001295493.1">
    <property type="nucleotide sequence ID" value="NZ_STEB01000009.1"/>
</dbReference>
<dbReference type="SMR" id="P0AEB7"/>
<dbReference type="BioGRID" id="4260342">
    <property type="interactions" value="37"/>
</dbReference>
<dbReference type="DIP" id="DIP-47897N"/>
<dbReference type="FunCoup" id="P0AEB7">
    <property type="interactions" value="16"/>
</dbReference>
<dbReference type="STRING" id="511145.b1809"/>
<dbReference type="jPOST" id="P0AEB7"/>
<dbReference type="PaxDb" id="511145-b1809"/>
<dbReference type="EnsemblBacteria" id="AAC74879">
    <property type="protein sequence ID" value="AAC74879"/>
    <property type="gene ID" value="b1809"/>
</dbReference>
<dbReference type="GeneID" id="946357"/>
<dbReference type="KEGG" id="ecj:JW5295"/>
<dbReference type="KEGG" id="eco:b1809"/>
<dbReference type="KEGG" id="ecoc:C3026_10305"/>
<dbReference type="PATRIC" id="fig|511145.12.peg.1885"/>
<dbReference type="EchoBASE" id="EB3287"/>
<dbReference type="eggNOG" id="COG0251">
    <property type="taxonomic scope" value="Bacteria"/>
</dbReference>
<dbReference type="HOGENOM" id="CLU_100715_6_1_6"/>
<dbReference type="InParanoid" id="P0AEB7"/>
<dbReference type="OMA" id="NEAWDAW"/>
<dbReference type="OrthoDB" id="6899345at2"/>
<dbReference type="PhylomeDB" id="P0AEB7"/>
<dbReference type="BioCyc" id="EcoCyc:G6993-MONOMER"/>
<dbReference type="PRO" id="PR:P0AEB7"/>
<dbReference type="Proteomes" id="UP000000625">
    <property type="component" value="Chromosome"/>
</dbReference>
<dbReference type="GO" id="GO:0005829">
    <property type="term" value="C:cytosol"/>
    <property type="evidence" value="ECO:0000314"/>
    <property type="project" value="EcoCyc"/>
</dbReference>
<dbReference type="GO" id="GO:0044010">
    <property type="term" value="P:single-species biofilm formation"/>
    <property type="evidence" value="ECO:0000315"/>
    <property type="project" value="EcoCyc"/>
</dbReference>
<dbReference type="CDD" id="cd06150">
    <property type="entry name" value="YjgF_YER057c_UK114_like_2"/>
    <property type="match status" value="1"/>
</dbReference>
<dbReference type="FunFam" id="3.30.1330.40:FF:000002">
    <property type="entry name" value="Endoribonuclease L-PSP family protein"/>
    <property type="match status" value="1"/>
</dbReference>
<dbReference type="Gene3D" id="3.30.1330.40">
    <property type="entry name" value="RutC-like"/>
    <property type="match status" value="1"/>
</dbReference>
<dbReference type="InterPro" id="IPR019897">
    <property type="entry name" value="RidA_CS"/>
</dbReference>
<dbReference type="InterPro" id="IPR035959">
    <property type="entry name" value="RutC-like_sf"/>
</dbReference>
<dbReference type="InterPro" id="IPR006175">
    <property type="entry name" value="YjgF/YER057c/UK114"/>
</dbReference>
<dbReference type="InterPro" id="IPR035709">
    <property type="entry name" value="YoaB-like"/>
</dbReference>
<dbReference type="PANTHER" id="PTHR47328">
    <property type="match status" value="1"/>
</dbReference>
<dbReference type="PANTHER" id="PTHR47328:SF1">
    <property type="entry name" value="RUTC FAMILY PROTEIN YOAB"/>
    <property type="match status" value="1"/>
</dbReference>
<dbReference type="Pfam" id="PF01042">
    <property type="entry name" value="Ribonuc_L-PSP"/>
    <property type="match status" value="1"/>
</dbReference>
<dbReference type="SUPFAM" id="SSF55298">
    <property type="entry name" value="YjgF-like"/>
    <property type="match status" value="1"/>
</dbReference>
<dbReference type="PROSITE" id="PS01094">
    <property type="entry name" value="UPF0076"/>
    <property type="match status" value="1"/>
</dbReference>
<feature type="chain" id="PRO_0000170326" description="RutC family protein YoaB">
    <location>
        <begin position="1"/>
        <end position="114"/>
    </location>
</feature>
<keyword id="KW-1185">Reference proteome</keyword>
<sequence>MTIVRIDAEARWSDVVIHNNTLYYTGVPENLDADAFEQTANTLAQIDAVLEKQGSNKSSILDATIFLADKNDFAAMNKAWDAWVVAGHAPVRCTVQAGLMNPKYKVEIKIVAAV</sequence>
<reference key="1">
    <citation type="journal article" date="1996" name="DNA Res.">
        <title>A 460-kb DNA sequence of the Escherichia coli K-12 genome corresponding to the 40.1-50.0 min region on the linkage map.</title>
        <authorList>
            <person name="Itoh T."/>
            <person name="Aiba H."/>
            <person name="Baba T."/>
            <person name="Fujita K."/>
            <person name="Hayashi K."/>
            <person name="Inada T."/>
            <person name="Isono K."/>
            <person name="Kasai H."/>
            <person name="Kimura S."/>
            <person name="Kitakawa M."/>
            <person name="Kitagawa M."/>
            <person name="Makino K."/>
            <person name="Miki T."/>
            <person name="Mizobuchi K."/>
            <person name="Mori H."/>
            <person name="Mori T."/>
            <person name="Motomura K."/>
            <person name="Nakade S."/>
            <person name="Nakamura Y."/>
            <person name="Nashimoto H."/>
            <person name="Nishio Y."/>
            <person name="Oshima T."/>
            <person name="Saito N."/>
            <person name="Sampei G."/>
            <person name="Seki Y."/>
            <person name="Sivasundaram S."/>
            <person name="Tagami H."/>
            <person name="Takeda J."/>
            <person name="Takemoto K."/>
            <person name="Wada C."/>
            <person name="Yamamoto Y."/>
            <person name="Horiuchi T."/>
        </authorList>
    </citation>
    <scope>NUCLEOTIDE SEQUENCE [LARGE SCALE GENOMIC DNA]</scope>
    <source>
        <strain>K12 / W3110 / ATCC 27325 / DSM 5911</strain>
    </source>
</reference>
<reference key="2">
    <citation type="journal article" date="1997" name="Science">
        <title>The complete genome sequence of Escherichia coli K-12.</title>
        <authorList>
            <person name="Blattner F.R."/>
            <person name="Plunkett G. III"/>
            <person name="Bloch C.A."/>
            <person name="Perna N.T."/>
            <person name="Burland V."/>
            <person name="Riley M."/>
            <person name="Collado-Vides J."/>
            <person name="Glasner J.D."/>
            <person name="Rode C.K."/>
            <person name="Mayhew G.F."/>
            <person name="Gregor J."/>
            <person name="Davis N.W."/>
            <person name="Kirkpatrick H.A."/>
            <person name="Goeden M.A."/>
            <person name="Rose D.J."/>
            <person name="Mau B."/>
            <person name="Shao Y."/>
        </authorList>
    </citation>
    <scope>NUCLEOTIDE SEQUENCE [LARGE SCALE GENOMIC DNA]</scope>
    <source>
        <strain>K12 / MG1655 / ATCC 47076</strain>
    </source>
</reference>
<reference key="3">
    <citation type="journal article" date="2006" name="Mol. Syst. Biol.">
        <title>Highly accurate genome sequences of Escherichia coli K-12 strains MG1655 and W3110.</title>
        <authorList>
            <person name="Hayashi K."/>
            <person name="Morooka N."/>
            <person name="Yamamoto Y."/>
            <person name="Fujita K."/>
            <person name="Isono K."/>
            <person name="Choi S."/>
            <person name="Ohtsubo E."/>
            <person name="Baba T."/>
            <person name="Wanner B.L."/>
            <person name="Mori H."/>
            <person name="Horiuchi T."/>
        </authorList>
    </citation>
    <scope>NUCLEOTIDE SEQUENCE [LARGE SCALE GENOMIC DNA]</scope>
    <source>
        <strain>K12 / W3110 / ATCC 27325 / DSM 5911</strain>
    </source>
</reference>
<organism>
    <name type="scientific">Escherichia coli (strain K12)</name>
    <dbReference type="NCBI Taxonomy" id="83333"/>
    <lineage>
        <taxon>Bacteria</taxon>
        <taxon>Pseudomonadati</taxon>
        <taxon>Pseudomonadota</taxon>
        <taxon>Gammaproteobacteria</taxon>
        <taxon>Enterobacterales</taxon>
        <taxon>Enterobacteriaceae</taxon>
        <taxon>Escherichia</taxon>
    </lineage>
</organism>
<name>YOAB_ECOLI</name>